<gene>
    <name type="primary">iap</name>
    <name type="ordered locus">lin0591</name>
</gene>
<protein>
    <recommendedName>
        <fullName>Probable endopeptidase p60</fullName>
        <ecNumber>3.4.-.-</ecNumber>
    </recommendedName>
    <alternativeName>
        <fullName>Invasion-associated protein p60</fullName>
    </alternativeName>
</protein>
<reference key="1">
    <citation type="journal article" date="1992" name="Appl. Environ. Microbiol.">
        <title>The homologous and heterologous regions within the iap gene allow genus- and species-specific identification of Listeria spp. by polymerase chain reaction.</title>
        <authorList>
            <person name="Bubert A."/>
            <person name="Koehler S."/>
            <person name="Goebel W."/>
        </authorList>
    </citation>
    <scope>NUCLEOTIDE SEQUENCE [GENOMIC DNA]</scope>
    <source>
        <strain>Serovar 6b</strain>
    </source>
</reference>
<reference key="2">
    <citation type="journal article" date="2001" name="Science">
        <title>Comparative genomics of Listeria species.</title>
        <authorList>
            <person name="Glaser P."/>
            <person name="Frangeul L."/>
            <person name="Buchrieser C."/>
            <person name="Rusniok C."/>
            <person name="Amend A."/>
            <person name="Baquero F."/>
            <person name="Berche P."/>
            <person name="Bloecker H."/>
            <person name="Brandt P."/>
            <person name="Chakraborty T."/>
            <person name="Charbit A."/>
            <person name="Chetouani F."/>
            <person name="Couve E."/>
            <person name="de Daruvar A."/>
            <person name="Dehoux P."/>
            <person name="Domann E."/>
            <person name="Dominguez-Bernal G."/>
            <person name="Duchaud E."/>
            <person name="Durant L."/>
            <person name="Dussurget O."/>
            <person name="Entian K.-D."/>
            <person name="Fsihi H."/>
            <person name="Garcia-del Portillo F."/>
            <person name="Garrido P."/>
            <person name="Gautier L."/>
            <person name="Goebel W."/>
            <person name="Gomez-Lopez N."/>
            <person name="Hain T."/>
            <person name="Hauf J."/>
            <person name="Jackson D."/>
            <person name="Jones L.-M."/>
            <person name="Kaerst U."/>
            <person name="Kreft J."/>
            <person name="Kuhn M."/>
            <person name="Kunst F."/>
            <person name="Kurapkat G."/>
            <person name="Madueno E."/>
            <person name="Maitournam A."/>
            <person name="Mata Vicente J."/>
            <person name="Ng E."/>
            <person name="Nedjari H."/>
            <person name="Nordsiek G."/>
            <person name="Novella S."/>
            <person name="de Pablos B."/>
            <person name="Perez-Diaz J.-C."/>
            <person name="Purcell R."/>
            <person name="Remmel B."/>
            <person name="Rose M."/>
            <person name="Schlueter T."/>
            <person name="Simoes N."/>
            <person name="Tierrez A."/>
            <person name="Vazquez-Boland J.-A."/>
            <person name="Voss H."/>
            <person name="Wehland J."/>
            <person name="Cossart P."/>
        </authorList>
    </citation>
    <scope>NUCLEOTIDE SEQUENCE [LARGE SCALE GENOMIC DNA]</scope>
    <source>
        <strain>ATCC BAA-680 / CLIP 11262</strain>
    </source>
</reference>
<reference key="3">
    <citation type="journal article" date="1992" name="J. Bacteriol.">
        <title>Structural and functional properties of the p60 proteins from different Listeria species.</title>
        <authorList>
            <person name="Bubert A."/>
            <person name="Kuhn M."/>
            <person name="Goebel W."/>
            <person name="Koehler S."/>
        </authorList>
    </citation>
    <scope>DISCUSSION OF SEQUENCE</scope>
</reference>
<proteinExistence type="inferred from homology"/>
<organism>
    <name type="scientific">Listeria innocua serovar 6a (strain ATCC BAA-680 / CLIP 11262)</name>
    <dbReference type="NCBI Taxonomy" id="272626"/>
    <lineage>
        <taxon>Bacteria</taxon>
        <taxon>Bacillati</taxon>
        <taxon>Bacillota</taxon>
        <taxon>Bacilli</taxon>
        <taxon>Bacillales</taxon>
        <taxon>Listeriaceae</taxon>
        <taxon>Listeria</taxon>
    </lineage>
</organism>
<name>P60_LISIN</name>
<evidence type="ECO:0000250" key="1"/>
<evidence type="ECO:0000255" key="2">
    <source>
        <dbReference type="PROSITE-ProRule" id="PRU01117"/>
    </source>
</evidence>
<evidence type="ECO:0000255" key="3">
    <source>
        <dbReference type="PROSITE-ProRule" id="PRU01118"/>
    </source>
</evidence>
<evidence type="ECO:0000255" key="4">
    <source>
        <dbReference type="PROSITE-ProRule" id="PRU01284"/>
    </source>
</evidence>
<evidence type="ECO:0000256" key="5">
    <source>
        <dbReference type="SAM" id="MobiDB-lite"/>
    </source>
</evidence>
<evidence type="ECO:0000305" key="6"/>
<feature type="signal peptide" evidence="1">
    <location>
        <begin position="1"/>
        <end position="27"/>
    </location>
</feature>
<feature type="chain" id="PRO_0000019758" description="Probable endopeptidase p60">
    <location>
        <begin position="28"/>
        <end position="467"/>
    </location>
</feature>
<feature type="domain" description="LysM 1" evidence="3">
    <location>
        <begin position="28"/>
        <end position="71"/>
    </location>
</feature>
<feature type="domain" description="SH3b" evidence="2">
    <location>
        <begin position="79"/>
        <end position="143"/>
    </location>
</feature>
<feature type="domain" description="LysM 2" evidence="3">
    <location>
        <begin position="199"/>
        <end position="242"/>
    </location>
</feature>
<feature type="domain" description="NlpC/P60" evidence="4">
    <location>
        <begin position="349"/>
        <end position="467"/>
    </location>
</feature>
<feature type="region of interest" description="Disordered" evidence="5">
    <location>
        <begin position="154"/>
        <end position="199"/>
    </location>
</feature>
<feature type="region of interest" description="Disordered" evidence="5">
    <location>
        <begin position="247"/>
        <end position="348"/>
    </location>
</feature>
<feature type="region of interest" description="7 X 2 AA tandem repeats of T-N">
    <location>
        <begin position="330"/>
        <end position="343"/>
    </location>
</feature>
<feature type="compositionally biased region" description="Low complexity" evidence="5">
    <location>
        <begin position="172"/>
        <end position="185"/>
    </location>
</feature>
<feature type="compositionally biased region" description="Low complexity" evidence="5">
    <location>
        <begin position="288"/>
        <end position="348"/>
    </location>
</feature>
<feature type="active site" description="Nucleophile" evidence="4">
    <location>
        <position position="379"/>
    </location>
</feature>
<feature type="active site" description="Proton acceptor" evidence="4">
    <location>
        <position position="429"/>
    </location>
</feature>
<feature type="active site" evidence="4">
    <location>
        <position position="441"/>
    </location>
</feature>
<feature type="sequence variant" description="In strain: Serovar 6B.">
    <original>L</original>
    <variation>P</variation>
    <location>
        <position position="240"/>
    </location>
</feature>
<feature type="sequence variant" description="In strain: Serovar 6B.">
    <original>K</original>
    <variation>KNTNTNTNTNTNTNT</variation>
    <location>
        <position position="328"/>
    </location>
</feature>
<comment type="function">
    <text>This major extracellular protein may be involved in the invasion of non-professional phagocytic cells by Listeria.</text>
</comment>
<comment type="domain">
    <text>LysM domains are thought to be involved in peptidoglycan binding.</text>
</comment>
<comment type="similarity">
    <text evidence="4 6">Belongs to the peptidase C40 family.</text>
</comment>
<comment type="sequence caution" evidence="6">
    <conflict type="erroneous initiation">
        <sequence resource="EMBL-CDS" id="CAC95823"/>
    </conflict>
</comment>
<sequence>MNMKKATIAATAGIAVTAFAAPTIASASTVVVEAGDTLWGIAQSKGTTVDAIKKANNLTTDKIVPGQKLQVNEVATEEKAEKSVSATWLNVRSGAGVDHSILTSIKGGTKVTVETTESNGWHKITYNDGKTGYVNGKYLTDKATSTPVVKQEVKKETTQQVKPATEAKTEVKQPTTQQTAPAPKAAETKEAPVVDQNATTHNVKSGDTIWALSVKYGVSVQDIMSWNNLSSSSIYVGQKLAIKQPTKTVAPKAETKTQAPAAEKQTAPAVKENSNANTATTEKKETATEQQTTTKAPTQAAKPAPAPSTNTNKTNTTNNNTNASTPSKNTNTNTNTNTNTNTNQGSTNNASASALIAEAQKHLGKAYSWGGNGPTTFDCSGFTKYVFAKSGISLPRTSGAQYASTTRISESQAKPGDLVFFDYGSGISHVGIYVGNGQMINAQDNGVKYDNIHGAGWGKFLVGFGRV</sequence>
<keyword id="KW-0378">Hydrolase</keyword>
<keyword id="KW-0645">Protease</keyword>
<keyword id="KW-0677">Repeat</keyword>
<keyword id="KW-0732">Signal</keyword>
<keyword id="KW-0788">Thiol protease</keyword>
<dbReference type="EC" id="3.4.-.-"/>
<dbReference type="EMBL" id="M80349">
    <property type="protein sequence ID" value="AAA25283.1"/>
    <property type="molecule type" value="Genomic_DNA"/>
</dbReference>
<dbReference type="EMBL" id="AL596165">
    <property type="protein sequence ID" value="CAC95823.1"/>
    <property type="status" value="ALT_INIT"/>
    <property type="molecule type" value="Genomic_DNA"/>
</dbReference>
<dbReference type="PIR" id="AG1506">
    <property type="entry name" value="AG1506"/>
</dbReference>
<dbReference type="STRING" id="272626.gene:17564917"/>
<dbReference type="CAZy" id="CBM50">
    <property type="family name" value="Carbohydrate-Binding Module Family 50"/>
</dbReference>
<dbReference type="KEGG" id="lin:iap"/>
<dbReference type="eggNOG" id="COG0791">
    <property type="taxonomic scope" value="Bacteria"/>
</dbReference>
<dbReference type="eggNOG" id="COG1388">
    <property type="taxonomic scope" value="Bacteria"/>
</dbReference>
<dbReference type="eggNOG" id="COG3103">
    <property type="taxonomic scope" value="Bacteria"/>
</dbReference>
<dbReference type="HOGENOM" id="CLU_581142_0_0_9"/>
<dbReference type="Proteomes" id="UP000002513">
    <property type="component" value="Chromosome"/>
</dbReference>
<dbReference type="GO" id="GO:0008234">
    <property type="term" value="F:cysteine-type peptidase activity"/>
    <property type="evidence" value="ECO:0007669"/>
    <property type="project" value="UniProtKB-KW"/>
</dbReference>
<dbReference type="GO" id="GO:0006508">
    <property type="term" value="P:proteolysis"/>
    <property type="evidence" value="ECO:0007669"/>
    <property type="project" value="UniProtKB-KW"/>
</dbReference>
<dbReference type="CDD" id="cd00118">
    <property type="entry name" value="LysM"/>
    <property type="match status" value="2"/>
</dbReference>
<dbReference type="Gene3D" id="3.90.1720.10">
    <property type="entry name" value="endopeptidase domain like (from Nostoc punctiforme)"/>
    <property type="match status" value="1"/>
</dbReference>
<dbReference type="Gene3D" id="3.10.350.10">
    <property type="entry name" value="LysM domain"/>
    <property type="match status" value="2"/>
</dbReference>
<dbReference type="Gene3D" id="2.30.30.40">
    <property type="entry name" value="SH3 Domains"/>
    <property type="match status" value="1"/>
</dbReference>
<dbReference type="InterPro" id="IPR018392">
    <property type="entry name" value="LysM_dom"/>
</dbReference>
<dbReference type="InterPro" id="IPR036779">
    <property type="entry name" value="LysM_dom_sf"/>
</dbReference>
<dbReference type="InterPro" id="IPR000064">
    <property type="entry name" value="NLP_P60_dom"/>
</dbReference>
<dbReference type="InterPro" id="IPR038765">
    <property type="entry name" value="Papain-like_cys_pep_sf"/>
</dbReference>
<dbReference type="InterPro" id="IPR051202">
    <property type="entry name" value="Peptidase_C40"/>
</dbReference>
<dbReference type="InterPro" id="IPR003646">
    <property type="entry name" value="SH3-like_bac-type"/>
</dbReference>
<dbReference type="NCBIfam" id="NF010495">
    <property type="entry name" value="PRK13914.1"/>
    <property type="match status" value="1"/>
</dbReference>
<dbReference type="PANTHER" id="PTHR47053">
    <property type="entry name" value="MUREIN DD-ENDOPEPTIDASE MEPH-RELATED"/>
    <property type="match status" value="1"/>
</dbReference>
<dbReference type="PANTHER" id="PTHR47053:SF1">
    <property type="entry name" value="MUREIN DD-ENDOPEPTIDASE MEPH-RELATED"/>
    <property type="match status" value="1"/>
</dbReference>
<dbReference type="Pfam" id="PF01476">
    <property type="entry name" value="LysM"/>
    <property type="match status" value="2"/>
</dbReference>
<dbReference type="Pfam" id="PF00877">
    <property type="entry name" value="NLPC_P60"/>
    <property type="match status" value="1"/>
</dbReference>
<dbReference type="Pfam" id="PF08239">
    <property type="entry name" value="SH3_3"/>
    <property type="match status" value="1"/>
</dbReference>
<dbReference type="SMART" id="SM00257">
    <property type="entry name" value="LysM"/>
    <property type="match status" value="2"/>
</dbReference>
<dbReference type="SMART" id="SM00287">
    <property type="entry name" value="SH3b"/>
    <property type="match status" value="1"/>
</dbReference>
<dbReference type="SUPFAM" id="SSF54001">
    <property type="entry name" value="Cysteine proteinases"/>
    <property type="match status" value="1"/>
</dbReference>
<dbReference type="SUPFAM" id="SSF54106">
    <property type="entry name" value="LysM domain"/>
    <property type="match status" value="2"/>
</dbReference>
<dbReference type="PROSITE" id="PS51782">
    <property type="entry name" value="LYSM"/>
    <property type="match status" value="2"/>
</dbReference>
<dbReference type="PROSITE" id="PS51935">
    <property type="entry name" value="NLPC_P60"/>
    <property type="match status" value="1"/>
</dbReference>
<dbReference type="PROSITE" id="PS51781">
    <property type="entry name" value="SH3B"/>
    <property type="match status" value="1"/>
</dbReference>
<accession>Q01836</accession>